<name>LRC33_RAT</name>
<protein>
    <recommendedName>
        <fullName evidence="4">Transforming growth factor beta activator LRRC33</fullName>
    </recommendedName>
    <alternativeName>
        <fullName evidence="4">Leucine-rich repeat-containing protein 33^</fullName>
    </alternativeName>
    <alternativeName>
        <fullName evidence="2">Negative regulator of reactive oxygen species</fullName>
    </alternativeName>
</protein>
<feature type="signal peptide" evidence="3">
    <location>
        <begin position="1"/>
        <end position="24"/>
    </location>
</feature>
<feature type="chain" id="PRO_0000042662" description="Transforming growth factor beta activator LRRC33">
    <location>
        <begin position="25"/>
        <end position="692"/>
    </location>
</feature>
<feature type="topological domain" description="Extracellular" evidence="3">
    <location>
        <begin position="25"/>
        <end position="650"/>
    </location>
</feature>
<feature type="transmembrane region" description="Helical" evidence="3">
    <location>
        <begin position="651"/>
        <end position="671"/>
    </location>
</feature>
<feature type="topological domain" description="Cytoplasmic" evidence="3">
    <location>
        <begin position="672"/>
        <end position="692"/>
    </location>
</feature>
<feature type="domain" description="LRRNT" evidence="3">
    <location>
        <begin position="29"/>
        <end position="56"/>
    </location>
</feature>
<feature type="repeat" description="LRR 1" evidence="3">
    <location>
        <begin position="58"/>
        <end position="79"/>
    </location>
</feature>
<feature type="repeat" description="LRR 2" evidence="3">
    <location>
        <begin position="82"/>
        <end position="103"/>
    </location>
</feature>
<feature type="repeat" description="LRR 3" evidence="3">
    <location>
        <begin position="106"/>
        <end position="127"/>
    </location>
</feature>
<feature type="repeat" description="LRR 4" evidence="3">
    <location>
        <begin position="133"/>
        <end position="155"/>
    </location>
</feature>
<feature type="repeat" description="LRR 5" evidence="3">
    <location>
        <begin position="158"/>
        <end position="179"/>
    </location>
</feature>
<feature type="repeat" description="LRR 6" evidence="3">
    <location>
        <begin position="182"/>
        <end position="203"/>
    </location>
</feature>
<feature type="repeat" description="LRR 7" evidence="3">
    <location>
        <begin position="206"/>
        <end position="227"/>
    </location>
</feature>
<feature type="repeat" description="LRR 8" evidence="3">
    <location>
        <begin position="228"/>
        <end position="239"/>
    </location>
</feature>
<feature type="repeat" description="LRR 9" evidence="3">
    <location>
        <begin position="251"/>
        <end position="272"/>
    </location>
</feature>
<feature type="repeat" description="LRR 10" evidence="3">
    <location>
        <begin position="273"/>
        <end position="294"/>
    </location>
</feature>
<feature type="repeat" description="LRR 11" evidence="3">
    <location>
        <begin position="329"/>
        <end position="350"/>
    </location>
</feature>
<feature type="repeat" description="LRR 12" evidence="3">
    <location>
        <begin position="353"/>
        <end position="374"/>
    </location>
</feature>
<feature type="repeat" description="LRR 13" evidence="3">
    <location>
        <begin position="377"/>
        <end position="398"/>
    </location>
</feature>
<feature type="repeat" description="LRR 14" evidence="3">
    <location>
        <begin position="403"/>
        <end position="424"/>
    </location>
</feature>
<feature type="repeat" description="LRR 15" evidence="3">
    <location>
        <begin position="427"/>
        <end position="448"/>
    </location>
</feature>
<feature type="repeat" description="LRR 16" evidence="3">
    <location>
        <begin position="463"/>
        <end position="484"/>
    </location>
</feature>
<feature type="repeat" description="LRR 17" evidence="3">
    <location>
        <begin position="486"/>
        <end position="507"/>
    </location>
</feature>
<feature type="repeat" description="LRR 18" evidence="3">
    <location>
        <begin position="512"/>
        <end position="533"/>
    </location>
</feature>
<feature type="repeat" description="LRR 19" evidence="3">
    <location>
        <begin position="537"/>
        <end position="558"/>
    </location>
</feature>
<feature type="repeat" description="LRR 20" evidence="3">
    <location>
        <begin position="559"/>
        <end position="580"/>
    </location>
</feature>
<feature type="repeat" description="LRR 21" evidence="3">
    <location>
        <begin position="585"/>
        <end position="605"/>
    </location>
</feature>
<feature type="domain" description="LRRCT" evidence="3">
    <location>
        <begin position="606"/>
        <end position="643"/>
    </location>
</feature>
<feature type="glycosylation site" description="N-linked (GlcNAc...) asparagine" evidence="3">
    <location>
        <position position="74"/>
    </location>
</feature>
<feature type="glycosylation site" description="N-linked (GlcNAc...) asparagine" evidence="3">
    <location>
        <position position="155"/>
    </location>
</feature>
<feature type="glycosylation site" description="N-linked (GlcNAc...) asparagine" evidence="3">
    <location>
        <position position="232"/>
    </location>
</feature>
<feature type="glycosylation site" description="N-linked (GlcNAc...) asparagine" evidence="3">
    <location>
        <position position="292"/>
    </location>
</feature>
<feature type="glycosylation site" description="N-linked (GlcNAc...) asparagine" evidence="3">
    <location>
        <position position="309"/>
    </location>
</feature>
<feature type="glycosylation site" description="N-linked (GlcNAc...) asparagine" evidence="3">
    <location>
        <position position="312"/>
    </location>
</feature>
<feature type="glycosylation site" description="N-linked (GlcNAc...) asparagine" evidence="3">
    <location>
        <position position="408"/>
    </location>
</feature>
<feature type="glycosylation site" description="N-linked (GlcNAc...) asparagine" evidence="3">
    <location>
        <position position="500"/>
    </location>
</feature>
<feature type="glycosylation site" description="N-linked (GlcNAc...) asparagine" evidence="3">
    <location>
        <position position="622"/>
    </location>
</feature>
<feature type="disulfide bond" description="Interchain (with C-? in TGFB1); in linked form" evidence="2">
    <location>
        <position position="219"/>
    </location>
</feature>
<feature type="disulfide bond" description="Interchain (with C-? in TGFB1); in linked form" evidence="2">
    <location>
        <position position="363"/>
    </location>
</feature>
<gene>
    <name evidence="5" type="primary">Nrros</name>
    <name evidence="5" type="synonym">Lrrc33</name>
</gene>
<comment type="function">
    <text evidence="2">Key regulator of transforming growth factor beta-1 (TGFB1) specifically required for microglia function in the nervous system. Required for activation of latent TGF-beta-1 in macrophages and microglia: associates specifically via disulfide bonds with the Latency-associated peptide (LAP), which is the regulatory chain of TGFB1, and regulates integrin-dependent activation of TGF-beta-1. TGF-beta-1 activation mediated by LRRC33/NRROS is highly localized: there is little spreading of TGF-beta-1 activated from one microglial cell to neighboring microglia, suggesting the existence of localized and selective activation of TGF-beta-1 by LRRC33/NRROS. Indirectly plays a role in Toll-like receptor (TLR) signaling: ability to inhibit TLR-mediated NF-kappa-B activation and cytokine production is probably a consequence of its role in TGF-beta-1 signaling.</text>
</comment>
<comment type="subunit">
    <text evidence="1 2">Interacts (via LRR repeats) with TLR2, TLR3, TLR4, TLR9 and probably other Toll-like receptors (By similarity). Interacts with CYBB/NOX2; the interaction is direct. Interacts with TGFB1; associates via disulfide bonds with the Latency-associated peptide chain (LAP) regulatory chain of TGFB1, leading to regulate activation of TGF-beta-1 (By similarity).</text>
</comment>
<comment type="subcellular location">
    <subcellularLocation>
        <location evidence="2">Cell membrane</location>
        <topology evidence="3">Single-pass type I membrane protein</topology>
    </subcellularLocation>
    <subcellularLocation>
        <location evidence="2">Endoplasmic reticulum membrane</location>
        <topology evidence="3">Single-pass type I membrane protein</topology>
    </subcellularLocation>
</comment>
<comment type="similarity">
    <text evidence="4">Belongs to the LRRC32/LRRC33 family.</text>
</comment>
<organism>
    <name type="scientific">Rattus norvegicus</name>
    <name type="common">Rat</name>
    <dbReference type="NCBI Taxonomy" id="10116"/>
    <lineage>
        <taxon>Eukaryota</taxon>
        <taxon>Metazoa</taxon>
        <taxon>Chordata</taxon>
        <taxon>Craniata</taxon>
        <taxon>Vertebrata</taxon>
        <taxon>Euteleostomi</taxon>
        <taxon>Mammalia</taxon>
        <taxon>Eutheria</taxon>
        <taxon>Euarchontoglires</taxon>
        <taxon>Glires</taxon>
        <taxon>Rodentia</taxon>
        <taxon>Myomorpha</taxon>
        <taxon>Muroidea</taxon>
        <taxon>Muridae</taxon>
        <taxon>Murinae</taxon>
        <taxon>Rattus</taxon>
    </lineage>
</organism>
<reference key="1">
    <citation type="journal article" date="2004" name="Genome Res.">
        <title>The status, quality, and expansion of the NIH full-length cDNA project: the Mammalian Gene Collection (MGC).</title>
        <authorList>
            <consortium name="The MGC Project Team"/>
        </authorList>
    </citation>
    <scope>NUCLEOTIDE SEQUENCE [LARGE SCALE MRNA]</scope>
    <source>
        <tissue>Spleen</tissue>
    </source>
</reference>
<keyword id="KW-1003">Cell membrane</keyword>
<keyword id="KW-1015">Disulfide bond</keyword>
<keyword id="KW-0256">Endoplasmic reticulum</keyword>
<keyword id="KW-0325">Glycoprotein</keyword>
<keyword id="KW-0340">Growth factor binding</keyword>
<keyword id="KW-0433">Leucine-rich repeat</keyword>
<keyword id="KW-0472">Membrane</keyword>
<keyword id="KW-1185">Reference proteome</keyword>
<keyword id="KW-0677">Repeat</keyword>
<keyword id="KW-0732">Signal</keyword>
<keyword id="KW-0812">Transmembrane</keyword>
<keyword id="KW-1133">Transmembrane helix</keyword>
<sequence>MEFLPLWLCLGFHFLIVEWRSGRGTATAASQGGCKVVDRVADCRSLNLASVPSGLPAHSRMLVLDANPLRVLWNHSLQAYPRLEDLSLHSCHLDRISHWAFHEQGHLQNLVLADNRLSENYKESATALHTLLRLRRLDLSGNSLTEDMAALMLQNLSSLEVVSLARNTLMRLDDSVFEGLERLVELDLQRNYIFEIEGGAFDGLTELRRLNLAYNNLPCIVDFSLTQLRFLNVSYNILEWFLAAREEAAFELEILDLSHNQLLFFPLLPQCGKLHTLLLQDNSMGFYRELYNTSSPQEMVAQFLLVDGNVTNITTVSLWEEFSSSDLSALRFLDMSQNQLRHLPDGFLKKTPSLSHLNLNQNCLTKLHIREHEPPGALTELDLSRNQLAELHLAPGLTGSLKNLRVFNLSSNQLLGVPTGLFHSASSITTLDMSHNQISLCPQTVPLDWEEPSSCVDFRNMASLRSLSLDGCGLKALQDCPFQGTSLTHLDLSSNWGILNGSVSPLSAVAPTLQVLSLRNVGLGSGAAEMDFSGFGNLRELDLSGNSLTSFPKFKGSSALQTLDLRRNSLTALPQRVVSEQPLRGLQTIYLSQNPYDCCGVEGWGALQHFKTIADLSMVTCNLSSKIIRVVELPEGIPQDCKWGQVDTGLFYLVLILPSCLTLLVASTVIFLTFKKPLLQVIKSRCHWSSIY</sequence>
<proteinExistence type="evidence at transcript level"/>
<dbReference type="EMBL" id="BC091190">
    <property type="protein sequence ID" value="AAH91190.1"/>
    <property type="molecule type" value="mRNA"/>
</dbReference>
<dbReference type="RefSeq" id="NP_001020166.1">
    <property type="nucleotide sequence ID" value="NM_001024995.1"/>
</dbReference>
<dbReference type="RefSeq" id="XP_006248510.1">
    <property type="nucleotide sequence ID" value="XM_006248448.5"/>
</dbReference>
<dbReference type="SMR" id="Q5BK65"/>
<dbReference type="FunCoup" id="Q5BK65">
    <property type="interactions" value="197"/>
</dbReference>
<dbReference type="STRING" id="10116.ENSRNOP00000048680"/>
<dbReference type="GlyCosmos" id="Q5BK65">
    <property type="glycosylation" value="9 sites, No reported glycans"/>
</dbReference>
<dbReference type="GlyGen" id="Q5BK65">
    <property type="glycosylation" value="9 sites"/>
</dbReference>
<dbReference type="PhosphoSitePlus" id="Q5BK65"/>
<dbReference type="PaxDb" id="10116-ENSRNOP00000048680"/>
<dbReference type="Ensembl" id="ENSRNOT00000050364.4">
    <property type="protein sequence ID" value="ENSRNOP00000048680.3"/>
    <property type="gene ID" value="ENSRNOG00000001752.7"/>
</dbReference>
<dbReference type="GeneID" id="303875"/>
<dbReference type="KEGG" id="rno:303875"/>
<dbReference type="UCSC" id="RGD:1310771">
    <property type="organism name" value="rat"/>
</dbReference>
<dbReference type="AGR" id="RGD:1310771"/>
<dbReference type="CTD" id="375387"/>
<dbReference type="RGD" id="1310771">
    <property type="gene designation" value="Nrros"/>
</dbReference>
<dbReference type="eggNOG" id="KOG0619">
    <property type="taxonomic scope" value="Eukaryota"/>
</dbReference>
<dbReference type="GeneTree" id="ENSGT00940000157975"/>
<dbReference type="HOGENOM" id="CLU_024194_0_0_1"/>
<dbReference type="InParanoid" id="Q5BK65"/>
<dbReference type="OrthoDB" id="56658at9989"/>
<dbReference type="PhylomeDB" id="Q5BK65"/>
<dbReference type="PRO" id="PR:Q5BK65"/>
<dbReference type="Proteomes" id="UP000002494">
    <property type="component" value="Chromosome 11"/>
</dbReference>
<dbReference type="Bgee" id="ENSRNOG00000001752">
    <property type="expression patterns" value="Expressed in spleen and 19 other cell types or tissues"/>
</dbReference>
<dbReference type="GO" id="GO:0009986">
    <property type="term" value="C:cell surface"/>
    <property type="evidence" value="ECO:0000250"/>
    <property type="project" value="UniProtKB"/>
</dbReference>
<dbReference type="GO" id="GO:0005783">
    <property type="term" value="C:endoplasmic reticulum"/>
    <property type="evidence" value="ECO:0000250"/>
    <property type="project" value="UniProtKB"/>
</dbReference>
<dbReference type="GO" id="GO:0005789">
    <property type="term" value="C:endoplasmic reticulum membrane"/>
    <property type="evidence" value="ECO:0007669"/>
    <property type="project" value="UniProtKB-SubCell"/>
</dbReference>
<dbReference type="GO" id="GO:0005615">
    <property type="term" value="C:extracellular space"/>
    <property type="evidence" value="ECO:0000318"/>
    <property type="project" value="GO_Central"/>
</dbReference>
<dbReference type="GO" id="GO:0005886">
    <property type="term" value="C:plasma membrane"/>
    <property type="evidence" value="ECO:0007669"/>
    <property type="project" value="UniProtKB-SubCell"/>
</dbReference>
<dbReference type="GO" id="GO:0141069">
    <property type="term" value="F:receptor ligand inhibitor activity"/>
    <property type="evidence" value="ECO:0000250"/>
    <property type="project" value="UniProtKB"/>
</dbReference>
<dbReference type="GO" id="GO:0050431">
    <property type="term" value="F:transforming growth factor beta binding"/>
    <property type="evidence" value="ECO:0000266"/>
    <property type="project" value="RGD"/>
</dbReference>
<dbReference type="GO" id="GO:0006955">
    <property type="term" value="P:immune response"/>
    <property type="evidence" value="ECO:0000250"/>
    <property type="project" value="UniProtKB"/>
</dbReference>
<dbReference type="GO" id="GO:0006954">
    <property type="term" value="P:inflammatory response"/>
    <property type="evidence" value="ECO:0000250"/>
    <property type="project" value="UniProtKB"/>
</dbReference>
<dbReference type="GO" id="GO:0014005">
    <property type="term" value="P:microglia development"/>
    <property type="evidence" value="ECO:0000250"/>
    <property type="project" value="UniProtKB"/>
</dbReference>
<dbReference type="GO" id="GO:0035583">
    <property type="term" value="P:sequestering of TGFbeta in extracellular matrix"/>
    <property type="evidence" value="ECO:0000250"/>
    <property type="project" value="UniProtKB"/>
</dbReference>
<dbReference type="GO" id="GO:0006801">
    <property type="term" value="P:superoxide metabolic process"/>
    <property type="evidence" value="ECO:0000266"/>
    <property type="project" value="RGD"/>
</dbReference>
<dbReference type="GO" id="GO:0007179">
    <property type="term" value="P:transforming growth factor beta receptor signaling pathway"/>
    <property type="evidence" value="ECO:0000266"/>
    <property type="project" value="RGD"/>
</dbReference>
<dbReference type="FunFam" id="3.80.10.10:FF:000776">
    <property type="entry name" value="Transforming growth factor beta activator LRRC33"/>
    <property type="match status" value="1"/>
</dbReference>
<dbReference type="FunFam" id="3.80.10.10:FF:000806">
    <property type="entry name" value="Transforming growth factor beta activator LRRC33"/>
    <property type="match status" value="1"/>
</dbReference>
<dbReference type="FunFam" id="3.80.10.10:FF:000913">
    <property type="entry name" value="Transforming growth factor beta activator LRRC33"/>
    <property type="match status" value="1"/>
</dbReference>
<dbReference type="Gene3D" id="3.80.10.10">
    <property type="entry name" value="Ribonuclease Inhibitor"/>
    <property type="match status" value="3"/>
</dbReference>
<dbReference type="InterPro" id="IPR001611">
    <property type="entry name" value="Leu-rich_rpt"/>
</dbReference>
<dbReference type="InterPro" id="IPR003591">
    <property type="entry name" value="Leu-rich_rpt_typical-subtyp"/>
</dbReference>
<dbReference type="InterPro" id="IPR032675">
    <property type="entry name" value="LRR_dom_sf"/>
</dbReference>
<dbReference type="InterPro" id="IPR050333">
    <property type="entry name" value="SLRP"/>
</dbReference>
<dbReference type="PANTHER" id="PTHR45712">
    <property type="entry name" value="AGAP008170-PA"/>
    <property type="match status" value="1"/>
</dbReference>
<dbReference type="PANTHER" id="PTHR45712:SF22">
    <property type="entry name" value="INSULIN-LIKE GROWTH FACTOR-BINDING PROTEIN COMPLEX ACID LABILE SUBUNIT"/>
    <property type="match status" value="1"/>
</dbReference>
<dbReference type="Pfam" id="PF13855">
    <property type="entry name" value="LRR_8"/>
    <property type="match status" value="4"/>
</dbReference>
<dbReference type="PRINTS" id="PR00019">
    <property type="entry name" value="LEURICHRPT"/>
</dbReference>
<dbReference type="SMART" id="SM00364">
    <property type="entry name" value="LRR_BAC"/>
    <property type="match status" value="4"/>
</dbReference>
<dbReference type="SMART" id="SM00369">
    <property type="entry name" value="LRR_TYP"/>
    <property type="match status" value="11"/>
</dbReference>
<dbReference type="SUPFAM" id="SSF52058">
    <property type="entry name" value="L domain-like"/>
    <property type="match status" value="1"/>
</dbReference>
<dbReference type="SUPFAM" id="SSF52047">
    <property type="entry name" value="RNI-like"/>
    <property type="match status" value="1"/>
</dbReference>
<dbReference type="PROSITE" id="PS51450">
    <property type="entry name" value="LRR"/>
    <property type="match status" value="16"/>
</dbReference>
<evidence type="ECO:0000250" key="1">
    <source>
        <dbReference type="UniProtKB" id="Q86YC3"/>
    </source>
</evidence>
<evidence type="ECO:0000250" key="2">
    <source>
        <dbReference type="UniProtKB" id="Q8BMT4"/>
    </source>
</evidence>
<evidence type="ECO:0000255" key="3"/>
<evidence type="ECO:0000305" key="4"/>
<evidence type="ECO:0000312" key="5">
    <source>
        <dbReference type="RGD" id="1310771"/>
    </source>
</evidence>
<accession>Q5BK65</accession>